<sequence length="1103" mass="124568">MAAGCLLALTLTLFQSLLIGPSSEEPFPSAVTIKSWVDKMQEDLVTLAKTASGVNQLVDIYEKYQDLYTVEPNNARQLVEIAARDIEKLLSNRSKALVRLALEAEKVQAAHQWREDFASNEVVYYNAKDDLDPEKNDSEPGSQRIKPVFIEDANFGRQISYQHAAVHIPTDIYEGSTIVLNELNWTSALDEVFKKNREEDPSLLWQVFGSATGLARYYPASPWVDNSRTPNKIDLYDVRRRPWYIQGAASPKDMLILVDVSGSVSGLTLKLIRTSVSEMLETLSDDDFVNVASFNSNAQDVSCFQHLVQANVRNKKVLKDAVNNITAKGITDYKKGFSFAFEQLLNYNVSRANCNKIIMLFTDGGEERAQEIFNKYNKDKKVRVFTFSVGQHNYDRGPIQWMACENKGYYYEIPSIGAIRINTQEYLDVLGRPMVLAGDKAKQVQWTNVYLDALELGLVITGTLPVFNITGQFENKTNLKNQLILGVMGVDVSLEDIKRLTPRFTLCPNGYYFAIDPNGYVLLHPNLQPKPIGVGIPTINLRKRRPNIQNPKSQEPVTLDFLDAELENDIKVEIRNKMIDGESGEKTFRTLVKSQDERYIDKGNRTYTWTPVNGTDYSLALVLPTYSFYYIKAKLEETITQARYSETLKPDNFEESGYTFIAPRDYCNDLKISDNNTEFLLNFNEFIDRKTPNNPSCNADLINRVLLDAGFTNELVQNYWSKQKNIKGVKARFVVTDGGITRVYPKEAGENWQENPETYEDSFYKRSLDNDNYVFTAPYFNKSGPGAYESGIMVSKAVEIYIQGKLLKPAVVGIKIDVNSWIENFTKTSIRDPCAGPVCDCKRNSDVMDCVILDDGGFLLMANHDDYTNQIGRFFGEIDPSLMRHLVNISVYAFNKSYDYQSVCEPGAAPKQGAGHRSAYVPSVADILQIGWWATAAAWSILQQFLLSLTFPRLLEAVEMEDDDFTASLSKQSCITEQTQYFFDNDSKSFSGVLDCGNCSRIFHGEKLMNTNLIFIMVESKGTCPCDTRLLIQAEQTSDGPNPCDMVKQPRYRKGPDVCFDNNVLEDYTDCGGVSGLNPSLWYIIGIQFLLLWLVSGSTHRLL</sequence>
<reference key="1">
    <citation type="journal article" date="1992" name="Neuron">
        <title>Structure and functional expression of alpha 1, alpha 2, and beta subunits of a novel human neuronal calcium channel subtype.</title>
        <authorList>
            <person name="Williams M.E."/>
            <person name="Feldman D.H."/>
            <person name="McCue A.F."/>
            <person name="Brenner R."/>
            <person name="Velicelebi G."/>
            <person name="Ellis S.B."/>
            <person name="Harpold M.M."/>
        </authorList>
    </citation>
    <scope>NUCLEOTIDE SEQUENCE [MRNA] (ISOFORM 2)</scope>
    <scope>TISSUE SPECIFICITY</scope>
</reference>
<reference key="2">
    <citation type="submission" date="2005-09" db="EMBL/GenBank/DDBJ databases">
        <authorList>
            <person name="Mural R.J."/>
            <person name="Istrail S."/>
            <person name="Sutton G.G."/>
            <person name="Florea L."/>
            <person name="Halpern A.L."/>
            <person name="Mobarry C.M."/>
            <person name="Lippert R."/>
            <person name="Walenz B."/>
            <person name="Shatkay H."/>
            <person name="Dew I."/>
            <person name="Miller J.R."/>
            <person name="Flanigan M.J."/>
            <person name="Edwards N.J."/>
            <person name="Bolanos R."/>
            <person name="Fasulo D."/>
            <person name="Halldorsson B.V."/>
            <person name="Hannenhalli S."/>
            <person name="Turner R."/>
            <person name="Yooseph S."/>
            <person name="Lu F."/>
            <person name="Nusskern D.R."/>
            <person name="Shue B.C."/>
            <person name="Zheng X.H."/>
            <person name="Zhong F."/>
            <person name="Delcher A.L."/>
            <person name="Huson D.H."/>
            <person name="Kravitz S.A."/>
            <person name="Mouchard L."/>
            <person name="Reinert K."/>
            <person name="Remington K.A."/>
            <person name="Clark A.G."/>
            <person name="Waterman M.S."/>
            <person name="Eichler E.E."/>
            <person name="Adams M.D."/>
            <person name="Hunkapiller M.W."/>
            <person name="Myers E.W."/>
            <person name="Venter J.C."/>
        </authorList>
    </citation>
    <scope>NUCLEOTIDE SEQUENCE [LARGE SCALE GENOMIC DNA]</scope>
</reference>
<reference key="3">
    <citation type="journal article" date="2004" name="Genome Res.">
        <title>The status, quality, and expansion of the NIH full-length cDNA project: the Mammalian Gene Collection (MGC).</title>
        <authorList>
            <consortium name="The MGC Project Team"/>
        </authorList>
    </citation>
    <scope>NUCLEOTIDE SEQUENCE [LARGE SCALE MRNA] (ISOFORM 2)</scope>
    <source>
        <tissue>Cerebellum</tissue>
    </source>
</reference>
<reference key="4">
    <citation type="journal article" date="1993" name="Neuropharmacology">
        <title>Human neuronal voltage-dependent calcium channels: studies on subunit structure and role in channel assembly.</title>
        <authorList>
            <person name="Brust P.F."/>
            <person name="Simerson S."/>
            <person name="McCue A.F."/>
            <person name="Deal C.R."/>
            <person name="Schoonmaker S."/>
            <person name="Williams M.E."/>
            <person name="Velicelebi G."/>
            <person name="Johnson E.C."/>
            <person name="Harpold M.M."/>
            <person name="Ellis S.B."/>
        </authorList>
    </citation>
    <scope>NUCLEOTIDE SEQUENCE [MRNA] OF 528-648 (ISOFORMS 1; 2; 3; 4 AND 5)</scope>
    <scope>TISSUE SPECIFICITY</scope>
    <scope>ALTERNATIVE SPLICING</scope>
    <source>
        <tissue>Neuroblastoma</tissue>
    </source>
</reference>
<reference key="5">
    <citation type="journal article" date="2005" name="J. Proteome Res.">
        <title>Human plasma N-glycoproteome analysis by immunoaffinity subtraction, hydrazide chemistry, and mass spectrometry.</title>
        <authorList>
            <person name="Liu T."/>
            <person name="Qian W.-J."/>
            <person name="Gritsenko M.A."/>
            <person name="Camp D.G. II"/>
            <person name="Monroe M.E."/>
            <person name="Moore R.J."/>
            <person name="Smith R.D."/>
        </authorList>
    </citation>
    <scope>GLYCOSYLATION [LARGE SCALE ANALYSIS] AT ASN-136; ASN-324 AND ASN-675</scope>
    <source>
        <tissue>Plasma</tissue>
    </source>
</reference>
<reference key="6">
    <citation type="journal article" date="2009" name="J. Proteome Res.">
        <title>Glycoproteomics analysis of human liver tissue by combination of multiple enzyme digestion and hydrazide chemistry.</title>
        <authorList>
            <person name="Chen R."/>
            <person name="Jiang X."/>
            <person name="Sun D."/>
            <person name="Han G."/>
            <person name="Wang F."/>
            <person name="Ye M."/>
            <person name="Wang L."/>
            <person name="Zou H."/>
        </authorList>
    </citation>
    <scope>GLYCOSYLATION [LARGE SCALE ANALYSIS] AT ASN-348; ASN-475 AND ASN-824</scope>
    <source>
        <tissue>Liver</tissue>
    </source>
</reference>
<reference key="7">
    <citation type="journal article" date="2012" name="Cell Calcium">
        <title>Identification of a disulfide bridge essential for structure and function of the voltage-gated Ca(2+) channel alpha(2)delta-1 auxiliary subunit.</title>
        <authorList>
            <person name="Calderon-Rivera A."/>
            <person name="Andrade A."/>
            <person name="Hernandez-Hernandez O."/>
            <person name="Gonzalez-Ramirez R."/>
            <person name="Sandoval A."/>
            <person name="Rivera M."/>
            <person name="Gomora J.C."/>
            <person name="Felix R."/>
        </authorList>
    </citation>
    <scope>INTERCHAIN DISULFIDE BOND</scope>
    <scope>SUBUNIT</scope>
</reference>
<reference key="8">
    <citation type="journal article" date="2021" name="Nature">
        <title>Structure of human Cav2.2 channel blocked by the painkiller ziconotide.</title>
        <authorList>
            <person name="Gao S."/>
            <person name="Yao X."/>
            <person name="Yan N."/>
        </authorList>
    </citation>
    <scope>STRUCTURE BY ELECTRON MICROSCOPY (3.0 ANGSTROMS) OF 38-361 IN COMPLEX WITH HUMAN CAV2.2/CACNA1B AND BETA-3 SUBUNIT IN PRESENCE AND ABSENCE OF THE OMEGA-CONOTOXIN MVIIA</scope>
    <scope>DISULFIDE BONDS</scope>
    <scope>GLYCOSYLATION AT ASN-92; ASN-184; ASN-348; ASN-468; ASN-613; ASN-781 AND ASN-895</scope>
</reference>
<reference key="9">
    <citation type="journal article" date="2022" name="Brain">
        <title>Biallelic CACNA2D1 loss-of-function variants cause early-onset developmental epileptic encephalopathy.</title>
        <authorList>
            <person name="Dahimene S."/>
            <person name="von Elsner L."/>
            <person name="Holling T."/>
            <person name="Mattas L.S."/>
            <person name="Pickard J."/>
            <person name="Lessel D."/>
            <person name="Pilch K.S."/>
            <person name="Kadurin I."/>
            <person name="Pratt W.S."/>
            <person name="Zhulin I.B."/>
            <person name="Dai H."/>
            <person name="Hempel M."/>
            <person name="Ruzhnikov M.R.Z."/>
            <person name="Kutsche K."/>
            <person name="Dolphin A.C."/>
        </authorList>
    </citation>
    <scope>VARIANT DEE110 ASP-209</scope>
    <scope>CHARACTERIZATION OF VARIANT DEE110 ASP-209</scope>
    <scope>FUNCTION</scope>
    <scope>SUBCELLULAR LOCATION</scope>
    <scope>INVOLVEMENT IN DEE110</scope>
</reference>
<protein>
    <recommendedName>
        <fullName>Voltage-dependent calcium channel subunit alpha-2/delta-1</fullName>
    </recommendedName>
    <alternativeName>
        <fullName>Voltage-gated calcium channel subunit alpha-2/delta-1</fullName>
    </alternativeName>
    <component>
        <recommendedName>
            <fullName>Voltage-dependent calcium channel subunit alpha-2-1</fullName>
        </recommendedName>
    </component>
    <component>
        <recommendedName>
            <fullName>Voltage-dependent calcium channel subunit delta-1</fullName>
        </recommendedName>
    </component>
</protein>
<comment type="function">
    <text evidence="1 7">The alpha-2/delta subunit of voltage-dependent calcium channels regulates calcium current density and activation/inactivation kinetics of the calcium channel (PubMed:35293990). Plays an important role in excitation-contraction coupling (By similarity).</text>
</comment>
<comment type="subunit">
    <text evidence="1">Dimer formed of alpha-2-1 and delta-1 chains; disulfide-linked. Voltage-dependent calcium channels are multisubunit complexes, consisting of alpha-1 (CACNA1), alpha-2 (CACNA2D), beta (CACNB) and delta (CACNA2D) subunits in a 1:1:1:1 ratio (By similarity).</text>
</comment>
<comment type="subcellular location">
    <subcellularLocation>
        <location evidence="12">Membrane</location>
        <topology evidence="12">Single-pass type I membrane protein</topology>
    </subcellularLocation>
    <subcellularLocation>
        <location evidence="7">Cell membrane</location>
    </subcellularLocation>
</comment>
<comment type="alternative products">
    <event type="alternative splicing"/>
    <isoform>
        <id>P54289-1</id>
        <name>1</name>
        <name>Alpha-2a</name>
        <sequence type="displayed"/>
    </isoform>
    <isoform>
        <id>P54289-2</id>
        <name>2</name>
        <name>Alpha-2b</name>
        <sequence type="described" ref="VSP_038348 VSP_038350"/>
    </isoform>
    <isoform>
        <id>P54289-3</id>
        <name>3</name>
        <name>Alpha-2c</name>
        <sequence type="described" ref="VSP_038349 VSP_038350"/>
    </isoform>
    <isoform>
        <id>P54289-4</id>
        <name>4</name>
        <name>Alpha-2d</name>
        <sequence type="described" ref="VSP_038349"/>
    </isoform>
    <isoform>
        <id>P54289-5</id>
        <name>5</name>
        <name>Alpha-2e</name>
        <sequence type="described" ref="VSP_038348"/>
    </isoform>
</comment>
<comment type="tissue specificity">
    <text evidence="5 8">Isoform 1 is expressed in skeletal muscle. Isoform 2 is expressed in the central nervous system. Isoform 2, isoform 4 and isoform 5 are expressed in neuroblastoma cells. Isoform 3, isoform 4 and isoform 5 are expressed in the aorta.</text>
</comment>
<comment type="domain">
    <text evidence="1">The MIDAS-like motif in the VWFA domain binds divalent metal cations and is required to promote trafficking of the alpha-1 (CACNA1) subunit to the plasma membrane by an integrin-like switch.</text>
</comment>
<comment type="PTM">
    <text evidence="1">Proteolytically processed into subunits alpha-2-1 and delta-1 that are disulfide-linked.</text>
</comment>
<comment type="disease" evidence="7">
    <disease id="DI-06558">
        <name>Developmental and epileptic encephalopathy 110</name>
        <acronym>DEE110</acronym>
        <description>A form of epileptic encephalopathy, a heterogeneous group of early-onset epilepsies characterized by refractory seizures, neurodevelopmental impairment, and poor prognosis. Development is normal prior to seizure onset, after which cognitive and motor delays become apparent. DEE110 is an autosomal recessive form characterized by profound global developmental delay and hypotonia apparent in infancy followed by onset of seizures in the first months or years of life.</description>
        <dbReference type="MIM" id="620149"/>
    </disease>
    <text>The disease is caused by variants affecting the gene represented in this entry.</text>
</comment>
<comment type="miscellaneous">
    <text>Binds gabapentin, an antiepileptic drug.</text>
</comment>
<comment type="similarity">
    <text evidence="12">Belongs to the calcium channel subunit alpha-2/delta family.</text>
</comment>
<proteinExistence type="evidence at protein level"/>
<keyword id="KW-0002">3D-structure</keyword>
<keyword id="KW-0025">Alternative splicing</keyword>
<keyword id="KW-0106">Calcium</keyword>
<keyword id="KW-0107">Calcium channel</keyword>
<keyword id="KW-0109">Calcium transport</keyword>
<keyword id="KW-1003">Cell membrane</keyword>
<keyword id="KW-0225">Disease variant</keyword>
<keyword id="KW-1015">Disulfide bond</keyword>
<keyword id="KW-0887">Epilepsy</keyword>
<keyword id="KW-0325">Glycoprotein</keyword>
<keyword id="KW-0991">Intellectual disability</keyword>
<keyword id="KW-0407">Ion channel</keyword>
<keyword id="KW-0406">Ion transport</keyword>
<keyword id="KW-0472">Membrane</keyword>
<keyword id="KW-0479">Metal-binding</keyword>
<keyword id="KW-0597">Phosphoprotein</keyword>
<keyword id="KW-1267">Proteomics identification</keyword>
<keyword id="KW-1185">Reference proteome</keyword>
<keyword id="KW-0732">Signal</keyword>
<keyword id="KW-0812">Transmembrane</keyword>
<keyword id="KW-1133">Transmembrane helix</keyword>
<keyword id="KW-0813">Transport</keyword>
<keyword id="KW-0851">Voltage-gated channel</keyword>
<organism>
    <name type="scientific">Homo sapiens</name>
    <name type="common">Human</name>
    <dbReference type="NCBI Taxonomy" id="9606"/>
    <lineage>
        <taxon>Eukaryota</taxon>
        <taxon>Metazoa</taxon>
        <taxon>Chordata</taxon>
        <taxon>Craniata</taxon>
        <taxon>Vertebrata</taxon>
        <taxon>Euteleostomi</taxon>
        <taxon>Mammalia</taxon>
        <taxon>Eutheria</taxon>
        <taxon>Euarchontoglires</taxon>
        <taxon>Primates</taxon>
        <taxon>Haplorrhini</taxon>
        <taxon>Catarrhini</taxon>
        <taxon>Hominidae</taxon>
        <taxon>Homo</taxon>
    </lineage>
</organism>
<feature type="signal peptide" evidence="3">
    <location>
        <begin position="1"/>
        <end position="24"/>
    </location>
</feature>
<feature type="chain" id="PRO_0000304633" description="Voltage-dependent calcium channel subunit alpha-2/delta-1">
    <location>
        <begin position="25"/>
        <end position="1103"/>
    </location>
</feature>
<feature type="chain" id="PRO_0000005001" description="Voltage-dependent calcium channel subunit alpha-2-1" evidence="1">
    <location>
        <begin position="25"/>
        <end position="956"/>
    </location>
</feature>
<feature type="chain" id="PRO_0000005002" description="Voltage-dependent calcium channel subunit delta-1" evidence="1">
    <location>
        <begin position="957"/>
        <end position="1103"/>
    </location>
</feature>
<feature type="topological domain" description="Extracellular" evidence="3">
    <location>
        <begin position="25"/>
        <end position="1073"/>
    </location>
</feature>
<feature type="transmembrane region" description="Helical" evidence="3">
    <location>
        <begin position="1074"/>
        <end position="1094"/>
    </location>
</feature>
<feature type="topological domain" description="Cytoplasmic" evidence="3">
    <location>
        <begin position="1095"/>
        <end position="1103"/>
    </location>
</feature>
<feature type="domain" description="VWFA" evidence="4">
    <location>
        <begin position="253"/>
        <end position="430"/>
    </location>
</feature>
<feature type="domain" description="Cache">
    <location>
        <begin position="446"/>
        <end position="556"/>
    </location>
</feature>
<feature type="short sequence motif" description="MIDAS-like motif">
    <location>
        <begin position="259"/>
        <end position="263"/>
    </location>
</feature>
<feature type="binding site" evidence="1">
    <location>
        <position position="259"/>
    </location>
    <ligand>
        <name>a divalent metal cation</name>
        <dbReference type="ChEBI" id="CHEBI:60240"/>
    </ligand>
</feature>
<feature type="binding site" evidence="1">
    <location>
        <position position="261"/>
    </location>
    <ligand>
        <name>a divalent metal cation</name>
        <dbReference type="ChEBI" id="CHEBI:60240"/>
    </ligand>
</feature>
<feature type="binding site" evidence="1">
    <location>
        <position position="263"/>
    </location>
    <ligand>
        <name>a divalent metal cation</name>
        <dbReference type="ChEBI" id="CHEBI:60240"/>
    </ligand>
</feature>
<feature type="modified residue" description="Phosphoserine" evidence="2">
    <location>
        <position position="119"/>
    </location>
</feature>
<feature type="glycosylation site" description="N-linked (GlcNAc...) asparagine" evidence="6 13 14">
    <location>
        <position position="92"/>
    </location>
</feature>
<feature type="glycosylation site" description="N-linked (GlcNAc...) asparagine" evidence="3">
    <location>
        <position position="136"/>
    </location>
</feature>
<feature type="glycosylation site" description="N-linked (GlcNAc...) asparagine" evidence="6 13 14">
    <location>
        <position position="184"/>
    </location>
</feature>
<feature type="glycosylation site" description="N-linked (GlcNAc...) asparagine" evidence="3">
    <location>
        <position position="324"/>
    </location>
</feature>
<feature type="glycosylation site" description="N-linked (GlcNAc...) asparagine" evidence="6 13 14">
    <location>
        <position position="348"/>
    </location>
</feature>
<feature type="glycosylation site" description="N-linked (GlcNAc...) asparagine" evidence="6 13 14">
    <location>
        <position position="468"/>
    </location>
</feature>
<feature type="glycosylation site" description="N-linked (GlcNAc...) asparagine" evidence="3">
    <location>
        <position position="475"/>
    </location>
</feature>
<feature type="glycosylation site" description="N-linked (GlcNAc...) asparagine" evidence="3">
    <location>
        <position position="604"/>
    </location>
</feature>
<feature type="glycosylation site" description="N-linked (GlcNAc...) asparagine" evidence="6 13 14">
    <location>
        <position position="613"/>
    </location>
</feature>
<feature type="glycosylation site" description="N-linked (GlcNAc...) asparagine" evidence="3">
    <location>
        <position position="675"/>
    </location>
</feature>
<feature type="glycosylation site" description="N-linked (GlcNAc...) asparagine" evidence="6 13 14">
    <location>
        <position position="781"/>
    </location>
</feature>
<feature type="glycosylation site" description="N-linked (GlcNAc...) asparagine" evidence="3">
    <location>
        <position position="824"/>
    </location>
</feature>
<feature type="glycosylation site" description="N-linked (GlcNAc...) asparagine" evidence="3">
    <location>
        <position position="888"/>
    </location>
</feature>
<feature type="glycosylation site" description="N-linked (GlcNAc...) asparagine" evidence="6 13 14">
    <location>
        <position position="895"/>
    </location>
</feature>
<feature type="glycosylation site" description="N-linked (GlcNAc...) asparagine" evidence="3">
    <location>
        <position position="985"/>
    </location>
</feature>
<feature type="glycosylation site" description="N-linked (GlcNAc...) asparagine" evidence="3">
    <location>
        <position position="998"/>
    </location>
</feature>
<feature type="disulfide bond" description="Interchain (between alpha-2-1 and delta-1 chains)">
    <location>
        <begin position="404"/>
        <end position="1059"/>
    </location>
</feature>
<feature type="splice variant" id="VSP_038349" description="In isoform 3 and isoform 4." evidence="11">
    <location>
        <begin position="531"/>
        <end position="554"/>
    </location>
</feature>
<feature type="splice variant" id="VSP_038348" description="In isoform 2 and isoform 5." evidence="9 10 11">
    <location>
        <begin position="531"/>
        <end position="549"/>
    </location>
</feature>
<feature type="splice variant" id="VSP_038350" description="In isoform 2 and isoform 3." evidence="9 10 11">
    <original>Y</original>
    <variation>SKKGKMKD</variation>
    <location>
        <position position="644"/>
    </location>
</feature>
<feature type="sequence variant" id="VAR_087875" description="In DEE110; does not promote calcium currents in transfected cells indicating loss of function in the positive regulation of voltage-gated calcium channel activity; severely decreased localization at the cell membrane; undergoes limited proteolytic cleavage." evidence="7">
    <original>G</original>
    <variation>D</variation>
    <location>
        <position position="209"/>
    </location>
</feature>
<feature type="sequence variant" id="VAR_053960" description="In dbSNP:rs9886043.">
    <original>E</original>
    <variation>D</variation>
    <location>
        <position position="1019"/>
    </location>
</feature>
<feature type="sequence variant" id="VAR_035047" description="In dbSNP:rs35131433.">
    <original>D</original>
    <variation>A</variation>
    <location>
        <position position="1057"/>
    </location>
</feature>
<feature type="sequence conflict" description="In Ref. 1; AAA51903." evidence="12" ref="1">
    <original>R</original>
    <variation>S</variation>
    <location>
        <position position="99"/>
    </location>
</feature>
<feature type="sequence conflict" description="In Ref. 1; AAA51903." evidence="12" ref="1">
    <original>T</original>
    <variation>R</variation>
    <location>
        <position position="386"/>
    </location>
</feature>
<feature type="sequence conflict" description="In Ref. 1; AAA51903." evidence="12" ref="1">
    <original>D</original>
    <variation>E</variation>
    <location>
        <position position="395"/>
    </location>
</feature>
<feature type="sequence conflict" description="In Ref. 4; no nucleotide entry." evidence="12" ref="4">
    <original>L</original>
    <variation>I</variation>
    <location>
        <position position="635"/>
    </location>
</feature>
<feature type="helix" evidence="16">
    <location>
        <begin position="30"/>
        <end position="52"/>
    </location>
</feature>
<feature type="helix" evidence="16">
    <location>
        <begin position="54"/>
        <end position="63"/>
    </location>
</feature>
<feature type="turn" evidence="16">
    <location>
        <begin position="64"/>
        <end position="66"/>
    </location>
</feature>
<feature type="strand" evidence="16">
    <location>
        <begin position="67"/>
        <end position="72"/>
    </location>
</feature>
<feature type="helix" evidence="16">
    <location>
        <begin position="75"/>
        <end position="109"/>
    </location>
</feature>
<feature type="strand" evidence="16">
    <location>
        <begin position="118"/>
        <end position="120"/>
    </location>
</feature>
<feature type="strand" evidence="16">
    <location>
        <begin position="122"/>
        <end position="126"/>
    </location>
</feature>
<feature type="strand" evidence="23">
    <location>
        <begin position="127"/>
        <end position="129"/>
    </location>
</feature>
<feature type="helix" evidence="17">
    <location>
        <begin position="135"/>
        <end position="137"/>
    </location>
</feature>
<feature type="strand" evidence="16">
    <location>
        <begin position="142"/>
        <end position="144"/>
    </location>
</feature>
<feature type="strand" evidence="16">
    <location>
        <begin position="150"/>
        <end position="152"/>
    </location>
</feature>
<feature type="turn" evidence="16">
    <location>
        <begin position="153"/>
        <end position="156"/>
    </location>
</feature>
<feature type="strand" evidence="16">
    <location>
        <begin position="157"/>
        <end position="163"/>
    </location>
</feature>
<feature type="strand" evidence="16">
    <location>
        <begin position="165"/>
        <end position="167"/>
    </location>
</feature>
<feature type="strand" evidence="24">
    <location>
        <begin position="170"/>
        <end position="172"/>
    </location>
</feature>
<feature type="strand" evidence="22">
    <location>
        <begin position="174"/>
        <end position="176"/>
    </location>
</feature>
<feature type="helix" evidence="16">
    <location>
        <begin position="177"/>
        <end position="185"/>
    </location>
</feature>
<feature type="helix" evidence="16">
    <location>
        <begin position="187"/>
        <end position="198"/>
    </location>
</feature>
<feature type="strand" evidence="16">
    <location>
        <begin position="206"/>
        <end position="210"/>
    </location>
</feature>
<feature type="strand" evidence="16">
    <location>
        <begin position="215"/>
        <end position="220"/>
    </location>
</feature>
<feature type="strand" evidence="16">
    <location>
        <begin position="227"/>
        <end position="229"/>
    </location>
</feature>
<feature type="helix" evidence="16">
    <location>
        <begin position="238"/>
        <end position="240"/>
    </location>
</feature>
<feature type="helix" evidence="16">
    <location>
        <begin position="242"/>
        <end position="247"/>
    </location>
</feature>
<feature type="strand" evidence="16">
    <location>
        <begin position="253"/>
        <end position="258"/>
    </location>
</feature>
<feature type="helix" evidence="16">
    <location>
        <begin position="262"/>
        <end position="264"/>
    </location>
</feature>
<feature type="helix" evidence="16">
    <location>
        <begin position="267"/>
        <end position="280"/>
    </location>
</feature>
<feature type="strand" evidence="18">
    <location>
        <begin position="285"/>
        <end position="287"/>
    </location>
</feature>
<feature type="strand" evidence="16">
    <location>
        <begin position="288"/>
        <end position="303"/>
    </location>
</feature>
<feature type="helix" evidence="16">
    <location>
        <begin position="312"/>
        <end position="323"/>
    </location>
</feature>
<feature type="helix" evidence="16">
    <location>
        <begin position="333"/>
        <end position="344"/>
    </location>
</feature>
<feature type="helix" evidence="19">
    <location>
        <begin position="347"/>
        <end position="349"/>
    </location>
</feature>
<feature type="strand" evidence="20">
    <location>
        <begin position="353"/>
        <end position="355"/>
    </location>
</feature>
<feature type="strand" evidence="16">
    <location>
        <begin position="356"/>
        <end position="362"/>
    </location>
</feature>
<feature type="helix" evidence="16">
    <location>
        <begin position="370"/>
        <end position="376"/>
    </location>
</feature>
<feature type="strand" evidence="17">
    <location>
        <begin position="377"/>
        <end position="379"/>
    </location>
</feature>
<feature type="strand" evidence="16">
    <location>
        <begin position="382"/>
        <end position="391"/>
    </location>
</feature>
<feature type="helix" evidence="16">
    <location>
        <begin position="397"/>
        <end position="404"/>
    </location>
</feature>
<feature type="turn" evidence="16">
    <location>
        <begin position="405"/>
        <end position="407"/>
    </location>
</feature>
<feature type="strand" evidence="16">
    <location>
        <begin position="409"/>
        <end position="413"/>
    </location>
</feature>
<feature type="helix" evidence="20">
    <location>
        <begin position="416"/>
        <end position="418"/>
    </location>
</feature>
<feature type="helix" evidence="16">
    <location>
        <begin position="419"/>
        <end position="430"/>
    </location>
</feature>
<feature type="helix" evidence="16">
    <location>
        <begin position="432"/>
        <end position="436"/>
    </location>
</feature>
<feature type="turn" evidence="16">
    <location>
        <begin position="438"/>
        <end position="440"/>
    </location>
</feature>
<feature type="strand" evidence="16">
    <location>
        <begin position="453"/>
        <end position="455"/>
    </location>
</feature>
<feature type="strand" evidence="16">
    <location>
        <begin position="457"/>
        <end position="467"/>
    </location>
</feature>
<feature type="strand" evidence="16">
    <location>
        <begin position="470"/>
        <end position="474"/>
    </location>
</feature>
<feature type="strand" evidence="22">
    <location>
        <begin position="478"/>
        <end position="480"/>
    </location>
</feature>
<feature type="strand" evidence="16">
    <location>
        <begin position="483"/>
        <end position="493"/>
    </location>
</feature>
<feature type="helix" evidence="16">
    <location>
        <begin position="494"/>
        <end position="498"/>
    </location>
</feature>
<feature type="strand" evidence="21">
    <location>
        <begin position="504"/>
        <end position="506"/>
    </location>
</feature>
<feature type="strand" evidence="16">
    <location>
        <begin position="511"/>
        <end position="515"/>
    </location>
</feature>
<feature type="strand" evidence="16">
    <location>
        <begin position="517"/>
        <end position="520"/>
    </location>
</feature>
<feature type="helix" evidence="16">
    <location>
        <begin position="561"/>
        <end position="564"/>
    </location>
</feature>
<feature type="helix" evidence="16">
    <location>
        <begin position="570"/>
        <end position="579"/>
    </location>
</feature>
<feature type="strand" evidence="16">
    <location>
        <begin position="584"/>
        <end position="593"/>
    </location>
</feature>
<feature type="strand" evidence="17">
    <location>
        <begin position="595"/>
        <end position="598"/>
    </location>
</feature>
<feature type="strand" evidence="16">
    <location>
        <begin position="600"/>
        <end position="611"/>
    </location>
</feature>
<feature type="strand" evidence="20">
    <location>
        <begin position="613"/>
        <end position="616"/>
    </location>
</feature>
<feature type="strand" evidence="16">
    <location>
        <begin position="618"/>
        <end position="624"/>
    </location>
</feature>
<feature type="helix" evidence="17">
    <location>
        <begin position="625"/>
        <end position="627"/>
    </location>
</feature>
<feature type="strand" evidence="16">
    <location>
        <begin position="628"/>
        <end position="633"/>
    </location>
</feature>
<feature type="strand" evidence="16">
    <location>
        <begin position="637"/>
        <end position="639"/>
    </location>
</feature>
<feature type="helix" evidence="16">
    <location>
        <begin position="640"/>
        <end position="646"/>
    </location>
</feature>
<feature type="helix" evidence="20">
    <location>
        <begin position="650"/>
        <end position="652"/>
    </location>
</feature>
<feature type="turn" evidence="16">
    <location>
        <begin position="653"/>
        <end position="655"/>
    </location>
</feature>
<feature type="strand" evidence="24">
    <location>
        <begin position="658"/>
        <end position="660"/>
    </location>
</feature>
<feature type="strand" evidence="20">
    <location>
        <begin position="668"/>
        <end position="670"/>
    </location>
</feature>
<feature type="helix" evidence="16">
    <location>
        <begin position="676"/>
        <end position="688"/>
    </location>
</feature>
<feature type="helix" evidence="17">
    <location>
        <begin position="691"/>
        <end position="693"/>
    </location>
</feature>
<feature type="turn" evidence="16">
    <location>
        <begin position="694"/>
        <end position="696"/>
    </location>
</feature>
<feature type="helix" evidence="16">
    <location>
        <begin position="699"/>
        <end position="716"/>
    </location>
</feature>
<feature type="turn" evidence="16">
    <location>
        <begin position="717"/>
        <end position="723"/>
    </location>
</feature>
<feature type="strand" evidence="16">
    <location>
        <begin position="727"/>
        <end position="736"/>
    </location>
</feature>
<feature type="turn" evidence="23">
    <location>
        <begin position="737"/>
        <end position="739"/>
    </location>
</feature>
<feature type="strand" evidence="16">
    <location>
        <begin position="743"/>
        <end position="748"/>
    </location>
</feature>
<feature type="turn" evidence="16">
    <location>
        <begin position="749"/>
        <end position="751"/>
    </location>
</feature>
<feature type="helix" evidence="16">
    <location>
        <begin position="758"/>
        <end position="760"/>
    </location>
</feature>
<feature type="helix" evidence="16">
    <location>
        <begin position="762"/>
        <end position="769"/>
    </location>
</feature>
<feature type="strand" evidence="16">
    <location>
        <begin position="771"/>
        <end position="776"/>
    </location>
</feature>
<feature type="strand" evidence="20">
    <location>
        <begin position="780"/>
        <end position="785"/>
    </location>
</feature>
<feature type="turn" evidence="16">
    <location>
        <begin position="788"/>
        <end position="790"/>
    </location>
</feature>
<feature type="strand" evidence="16">
    <location>
        <begin position="792"/>
        <end position="797"/>
    </location>
</feature>
<feature type="strand" evidence="20">
    <location>
        <begin position="800"/>
        <end position="804"/>
    </location>
</feature>
<feature type="strand" evidence="17">
    <location>
        <begin position="805"/>
        <end position="807"/>
    </location>
</feature>
<feature type="strand" evidence="16">
    <location>
        <begin position="810"/>
        <end position="816"/>
    </location>
</feature>
<feature type="helix" evidence="16">
    <location>
        <begin position="818"/>
        <end position="827"/>
    </location>
</feature>
<feature type="helix" evidence="16">
    <location>
        <begin position="828"/>
        <end position="830"/>
    </location>
</feature>
<feature type="strand" evidence="24">
    <location>
        <begin position="832"/>
        <end position="834"/>
    </location>
</feature>
<feature type="strand" evidence="21">
    <location>
        <begin position="846"/>
        <end position="849"/>
    </location>
</feature>
<feature type="strand" evidence="16">
    <location>
        <begin position="851"/>
        <end position="853"/>
    </location>
</feature>
<feature type="helix" evidence="16">
    <location>
        <begin position="855"/>
        <end position="857"/>
    </location>
</feature>
<feature type="strand" evidence="16">
    <location>
        <begin position="858"/>
        <end position="866"/>
    </location>
</feature>
<feature type="helix" evidence="16">
    <location>
        <begin position="868"/>
        <end position="870"/>
    </location>
</feature>
<feature type="helix" evidence="16">
    <location>
        <begin position="875"/>
        <end position="878"/>
    </location>
</feature>
<feature type="helix" evidence="16">
    <location>
        <begin position="880"/>
        <end position="888"/>
    </location>
</feature>
<feature type="strand" evidence="16">
    <location>
        <begin position="891"/>
        <end position="904"/>
    </location>
</feature>
<feature type="strand" evidence="16">
    <location>
        <begin position="972"/>
        <end position="983"/>
    </location>
</feature>
<feature type="strand" evidence="16">
    <location>
        <begin position="989"/>
        <end position="994"/>
    </location>
</feature>
<feature type="strand" evidence="15">
    <location>
        <begin position="997"/>
        <end position="999"/>
    </location>
</feature>
<feature type="strand" evidence="16">
    <location>
        <begin position="1001"/>
        <end position="1007"/>
    </location>
</feature>
<feature type="turn" evidence="20">
    <location>
        <begin position="1009"/>
        <end position="1012"/>
    </location>
</feature>
<feature type="strand" evidence="16">
    <location>
        <begin position="1014"/>
        <end position="1016"/>
    </location>
</feature>
<feature type="helix" evidence="20">
    <location>
        <begin position="1021"/>
        <end position="1023"/>
    </location>
</feature>
<feature type="strand" evidence="20">
    <location>
        <begin position="1036"/>
        <end position="1038"/>
    </location>
</feature>
<feature type="helix" evidence="16">
    <location>
        <begin position="1043"/>
        <end position="1046"/>
    </location>
</feature>
<feature type="strand" evidence="16">
    <location>
        <begin position="1047"/>
        <end position="1049"/>
    </location>
</feature>
<feature type="strand" evidence="20">
    <location>
        <begin position="1072"/>
        <end position="1074"/>
    </location>
</feature>
<name>CA2D1_HUMAN</name>
<gene>
    <name type="primary">CACNA2D1</name>
    <name type="synonym">CACNL2A</name>
    <name type="synonym">CCHL2A</name>
    <name type="synonym">MHS3</name>
</gene>
<accession>P54289</accession>
<accession>Q17R45</accession>
<accession>Q9UD80</accession>
<accession>Q9UD81</accession>
<accession>Q9UD82</accession>
<evidence type="ECO:0000250" key="1"/>
<evidence type="ECO:0000250" key="2">
    <source>
        <dbReference type="UniProtKB" id="P54290"/>
    </source>
</evidence>
<evidence type="ECO:0000255" key="3"/>
<evidence type="ECO:0000255" key="4">
    <source>
        <dbReference type="PROSITE-ProRule" id="PRU00219"/>
    </source>
</evidence>
<evidence type="ECO:0000269" key="5">
    <source>
    </source>
</evidence>
<evidence type="ECO:0000269" key="6">
    <source>
    </source>
</evidence>
<evidence type="ECO:0000269" key="7">
    <source>
    </source>
</evidence>
<evidence type="ECO:0000269" key="8">
    <source>
    </source>
</evidence>
<evidence type="ECO:0000303" key="9">
    <source>
    </source>
</evidence>
<evidence type="ECO:0000303" key="10">
    <source>
    </source>
</evidence>
<evidence type="ECO:0000303" key="11">
    <source>
    </source>
</evidence>
<evidence type="ECO:0000305" key="12"/>
<evidence type="ECO:0007744" key="13">
    <source>
        <dbReference type="PDB" id="7MIX"/>
    </source>
</evidence>
<evidence type="ECO:0007744" key="14">
    <source>
        <dbReference type="PDB" id="7MIY"/>
    </source>
</evidence>
<evidence type="ECO:0007829" key="15">
    <source>
        <dbReference type="PDB" id="7UHG"/>
    </source>
</evidence>
<evidence type="ECO:0007829" key="16">
    <source>
        <dbReference type="PDB" id="7VFS"/>
    </source>
</evidence>
<evidence type="ECO:0007829" key="17">
    <source>
        <dbReference type="PDB" id="7YG5"/>
    </source>
</evidence>
<evidence type="ECO:0007829" key="18">
    <source>
        <dbReference type="PDB" id="8FHS"/>
    </source>
</evidence>
<evidence type="ECO:0007829" key="19">
    <source>
        <dbReference type="PDB" id="8HLP"/>
    </source>
</evidence>
<evidence type="ECO:0007829" key="20">
    <source>
        <dbReference type="PDB" id="8WE6"/>
    </source>
</evidence>
<evidence type="ECO:0007829" key="21">
    <source>
        <dbReference type="PDB" id="8WE8"/>
    </source>
</evidence>
<evidence type="ECO:0007829" key="22">
    <source>
        <dbReference type="PDB" id="8WE9"/>
    </source>
</evidence>
<evidence type="ECO:0007829" key="23">
    <source>
        <dbReference type="PDB" id="8X90"/>
    </source>
</evidence>
<evidence type="ECO:0007829" key="24">
    <source>
        <dbReference type="PDB" id="8X93"/>
    </source>
</evidence>
<dbReference type="EMBL" id="M76559">
    <property type="protein sequence ID" value="AAA51903.1"/>
    <property type="molecule type" value="mRNA"/>
</dbReference>
<dbReference type="EMBL" id="CH471091">
    <property type="protein sequence ID" value="EAW76990.1"/>
    <property type="molecule type" value="Genomic_DNA"/>
</dbReference>
<dbReference type="EMBL" id="BC117468">
    <property type="protein sequence ID" value="AAI17469.1"/>
    <property type="molecule type" value="mRNA"/>
</dbReference>
<dbReference type="EMBL" id="BC117470">
    <property type="protein sequence ID" value="AAI17471.1"/>
    <property type="molecule type" value="mRNA"/>
</dbReference>
<dbReference type="CCDS" id="CCDS5598.1">
    <molecule id="P54289-2"/>
</dbReference>
<dbReference type="CCDS" id="CCDS94135.1">
    <molecule id="P54289-1"/>
</dbReference>
<dbReference type="PIR" id="JH0565">
    <property type="entry name" value="JH0565"/>
</dbReference>
<dbReference type="RefSeq" id="NP_000713.2">
    <molecule id="P54289-2"/>
    <property type="nucleotide sequence ID" value="NM_000722.4"/>
</dbReference>
<dbReference type="RefSeq" id="NP_001353796.1">
    <molecule id="P54289-1"/>
    <property type="nucleotide sequence ID" value="NM_001366867.1"/>
</dbReference>
<dbReference type="RefSeq" id="XP_005250627.1">
    <property type="nucleotide sequence ID" value="XM_005250570.2"/>
</dbReference>
<dbReference type="RefSeq" id="XP_005250629.1">
    <molecule id="P54289-3"/>
    <property type="nucleotide sequence ID" value="XM_005250572.4"/>
</dbReference>
<dbReference type="RefSeq" id="XP_005250630.1">
    <molecule id="P54289-5"/>
    <property type="nucleotide sequence ID" value="XM_005250573.4"/>
</dbReference>
<dbReference type="RefSeq" id="XP_005250631.1">
    <molecule id="P54289-4"/>
    <property type="nucleotide sequence ID" value="XM_005250574.4"/>
</dbReference>
<dbReference type="RefSeq" id="XP_054214950.1">
    <molecule id="P54289-3"/>
    <property type="nucleotide sequence ID" value="XM_054358975.1"/>
</dbReference>
<dbReference type="RefSeq" id="XP_054214953.1">
    <molecule id="P54289-5"/>
    <property type="nucleotide sequence ID" value="XM_054358978.1"/>
</dbReference>
<dbReference type="RefSeq" id="XP_054214955.1">
    <molecule id="P54289-4"/>
    <property type="nucleotide sequence ID" value="XM_054358980.1"/>
</dbReference>
<dbReference type="PDB" id="7MIX">
    <property type="method" value="EM"/>
    <property type="resolution" value="3.00 A"/>
    <property type="chains" value="D=1-1103"/>
</dbReference>
<dbReference type="PDB" id="7MIY">
    <property type="method" value="EM"/>
    <property type="resolution" value="3.10 A"/>
    <property type="chains" value="D=1-1103"/>
</dbReference>
<dbReference type="PDB" id="7UHF">
    <property type="method" value="EM"/>
    <property type="resolution" value="3.10 A"/>
    <property type="chains" value="D=1-1103"/>
</dbReference>
<dbReference type="PDB" id="7UHG">
    <property type="method" value="EM"/>
    <property type="resolution" value="3.00 A"/>
    <property type="chains" value="D=1-1103"/>
</dbReference>
<dbReference type="PDB" id="7VFS">
    <property type="method" value="EM"/>
    <property type="resolution" value="2.80 A"/>
    <property type="chains" value="B=1-1103"/>
</dbReference>
<dbReference type="PDB" id="7VFU">
    <property type="method" value="EM"/>
    <property type="resolution" value="3.00 A"/>
    <property type="chains" value="B=1-1103"/>
</dbReference>
<dbReference type="PDB" id="7VFV">
    <property type="method" value="EM"/>
    <property type="resolution" value="3.00 A"/>
    <property type="chains" value="B=1-1103"/>
</dbReference>
<dbReference type="PDB" id="7VFW">
    <property type="method" value="EM"/>
    <property type="resolution" value="3.30 A"/>
    <property type="chains" value="B=1-1103"/>
</dbReference>
<dbReference type="PDB" id="7XLQ">
    <property type="method" value="EM"/>
    <property type="resolution" value="3.10 A"/>
    <property type="chains" value="D=27-1103"/>
</dbReference>
<dbReference type="PDB" id="7YG5">
    <property type="method" value="EM"/>
    <property type="resolution" value="3.00 A"/>
    <property type="chains" value="D=1-1103"/>
</dbReference>
<dbReference type="PDB" id="8E59">
    <property type="method" value="EM"/>
    <property type="resolution" value="3.10 A"/>
    <property type="chains" value="D=1-1103"/>
</dbReference>
<dbReference type="PDB" id="8E5A">
    <property type="method" value="EM"/>
    <property type="resolution" value="3.30 A"/>
    <property type="chains" value="D=1-1103"/>
</dbReference>
<dbReference type="PDB" id="8E5B">
    <property type="method" value="EM"/>
    <property type="resolution" value="3.30 A"/>
    <property type="chains" value="D=1-1103"/>
</dbReference>
<dbReference type="PDB" id="8EPL">
    <property type="method" value="EM"/>
    <property type="resolution" value="3.10 A"/>
    <property type="chains" value="C=1-1103"/>
</dbReference>
<dbReference type="PDB" id="8EPM">
    <property type="method" value="EM"/>
    <property type="resolution" value="3.10 A"/>
    <property type="chains" value="C=1-1103"/>
</dbReference>
<dbReference type="PDB" id="8FHS">
    <property type="method" value="EM"/>
    <property type="resolution" value="3.30 A"/>
    <property type="chains" value="D=1-1103"/>
</dbReference>
<dbReference type="PDB" id="8HLP">
    <property type="method" value="EM"/>
    <property type="resolution" value="3.50 A"/>
    <property type="chains" value="F=1-1071"/>
</dbReference>
<dbReference type="PDB" id="8HMA">
    <property type="method" value="EM"/>
    <property type="resolution" value="3.40 A"/>
    <property type="chains" value="F=1-1071"/>
</dbReference>
<dbReference type="PDB" id="8HMB">
    <property type="method" value="EM"/>
    <property type="resolution" value="3.30 A"/>
    <property type="chains" value="E=1-1071"/>
</dbReference>
<dbReference type="PDB" id="8IF3">
    <property type="method" value="EM"/>
    <property type="resolution" value="3.20 A"/>
    <property type="chains" value="A=1-1103"/>
</dbReference>
<dbReference type="PDB" id="8IF4">
    <property type="method" value="EM"/>
    <property type="resolution" value="3.20 A"/>
    <property type="chains" value="A=1-1103"/>
</dbReference>
<dbReference type="PDB" id="8WE6">
    <property type="method" value="EM"/>
    <property type="resolution" value="2.90 A"/>
    <property type="chains" value="D=1-1103"/>
</dbReference>
<dbReference type="PDB" id="8WE7">
    <property type="method" value="EM"/>
    <property type="resolution" value="3.20 A"/>
    <property type="chains" value="D=1-1103"/>
</dbReference>
<dbReference type="PDB" id="8WE8">
    <property type="method" value="EM"/>
    <property type="resolution" value="2.90 A"/>
    <property type="chains" value="D=1-1103"/>
</dbReference>
<dbReference type="PDB" id="8WE9">
    <property type="method" value="EM"/>
    <property type="resolution" value="3.00 A"/>
    <property type="chains" value="D=1-1103"/>
</dbReference>
<dbReference type="PDB" id="8WEA">
    <property type="method" value="EM"/>
    <property type="resolution" value="3.20 A"/>
    <property type="chains" value="D=1-1103"/>
</dbReference>
<dbReference type="PDB" id="8X90">
    <property type="method" value="EM"/>
    <property type="resolution" value="2.95 A"/>
    <property type="chains" value="B=1-1103"/>
</dbReference>
<dbReference type="PDB" id="8X91">
    <property type="method" value="EM"/>
    <property type="resolution" value="3.11 A"/>
    <property type="chains" value="B=1-1103"/>
</dbReference>
<dbReference type="PDB" id="8X93">
    <property type="method" value="EM"/>
    <property type="resolution" value="2.92 A"/>
    <property type="chains" value="B=1-1103"/>
</dbReference>
<dbReference type="PDBsum" id="7MIX"/>
<dbReference type="PDBsum" id="7MIY"/>
<dbReference type="PDBsum" id="7UHF"/>
<dbReference type="PDBsum" id="7UHG"/>
<dbReference type="PDBsum" id="7VFS"/>
<dbReference type="PDBsum" id="7VFU"/>
<dbReference type="PDBsum" id="7VFV"/>
<dbReference type="PDBsum" id="7VFW"/>
<dbReference type="PDBsum" id="7XLQ"/>
<dbReference type="PDBsum" id="7YG5"/>
<dbReference type="PDBsum" id="8E59"/>
<dbReference type="PDBsum" id="8E5A"/>
<dbReference type="PDBsum" id="8E5B"/>
<dbReference type="PDBsum" id="8EPL"/>
<dbReference type="PDBsum" id="8EPM"/>
<dbReference type="PDBsum" id="8FHS"/>
<dbReference type="PDBsum" id="8HLP"/>
<dbReference type="PDBsum" id="8HMA"/>
<dbReference type="PDBsum" id="8HMB"/>
<dbReference type="PDBsum" id="8IF3"/>
<dbReference type="PDBsum" id="8IF4"/>
<dbReference type="PDBsum" id="8WE6"/>
<dbReference type="PDBsum" id="8WE7"/>
<dbReference type="PDBsum" id="8WE8"/>
<dbReference type="PDBsum" id="8WE9"/>
<dbReference type="PDBsum" id="8WEA"/>
<dbReference type="PDBsum" id="8X90"/>
<dbReference type="PDBsum" id="8X91"/>
<dbReference type="PDBsum" id="8X93"/>
<dbReference type="EMDB" id="EMD-23867"/>
<dbReference type="EMDB" id="EMD-23868"/>
<dbReference type="EMDB" id="EMD-26513"/>
<dbReference type="EMDB" id="EMD-26514"/>
<dbReference type="EMDB" id="EMD-27907"/>
<dbReference type="EMDB" id="EMD-27908"/>
<dbReference type="EMDB" id="EMD-27909"/>
<dbReference type="EMDB" id="EMD-28529"/>
<dbReference type="EMDB" id="EMD-28530"/>
<dbReference type="EMDB" id="EMD-29102"/>
<dbReference type="EMDB" id="EMD-31958"/>
<dbReference type="EMDB" id="EMD-31959"/>
<dbReference type="EMDB" id="EMD-31960"/>
<dbReference type="EMDB" id="EMD-31961"/>
<dbReference type="EMDB" id="EMD-33285"/>
<dbReference type="EMDB" id="EMD-33808"/>
<dbReference type="EMDB" id="EMD-34880"/>
<dbReference type="EMDB" id="EMD-34891"/>
<dbReference type="EMDB" id="EMD-34892"/>
<dbReference type="EMDB" id="EMD-35399"/>
<dbReference type="EMDB" id="EMD-35400"/>
<dbReference type="EMDB" id="EMD-37472"/>
<dbReference type="EMDB" id="EMD-37473"/>
<dbReference type="EMDB" id="EMD-37474"/>
<dbReference type="EMDB" id="EMD-37475"/>
<dbReference type="EMDB" id="EMD-37476"/>
<dbReference type="EMDB" id="EMD-38158"/>
<dbReference type="EMDB" id="EMD-38159"/>
<dbReference type="EMDB" id="EMD-38160"/>
<dbReference type="SMR" id="P54289"/>
<dbReference type="BioGRID" id="107235">
    <property type="interactions" value="84"/>
</dbReference>
<dbReference type="ComplexPortal" id="CPX-3192">
    <property type="entry name" value="Cav1.1 voltage-gated calcium channel complex, CACNA2D1-CACNB1-CACNG1 variant"/>
</dbReference>
<dbReference type="ComplexPortal" id="CPX-3195">
    <property type="entry name" value="Cav1.2 voltage-gated calcium channel complex, CACNA2D1-CACNB2 variant"/>
</dbReference>
<dbReference type="ComplexPortal" id="CPX-8699">
    <property type="entry name" value="Cav1.1 voltage-gated calcium channel complex, CACNA2D1-CACNB2-CACNG1 variant"/>
</dbReference>
<dbReference type="ComplexPortal" id="CPX-8725">
    <property type="entry name" value="Cav1.1 voltage-gated calcium channel complex, CACNA2D1-CACNB3-CACNG1 variant"/>
</dbReference>
<dbReference type="ComplexPortal" id="CPX-8726">
    <property type="entry name" value="Cav1.1 voltage-gated calcium channel complex, CACNA2D1-CACNB4-CACNG1 variant"/>
</dbReference>
<dbReference type="ComplexPortal" id="CPX-8861">
    <property type="entry name" value="Cav1.2 voltage-gated calcium channel complex, CACNA2D1-CACNB3 variant"/>
</dbReference>
<dbReference type="ComplexPortal" id="CPX-8862">
    <property type="entry name" value="Cav1.2 voltage-gated calcium channel complex, CACNA2D1-CACNB1 variant"/>
</dbReference>
<dbReference type="ComplexPortal" id="CPX-8863">
    <property type="entry name" value="Cav1.2 voltage-gated calcium channel complex, CACNA2D1-CACNB4 variant"/>
</dbReference>
<dbReference type="CORUM" id="P54289"/>
<dbReference type="FunCoup" id="P54289">
    <property type="interactions" value="1083"/>
</dbReference>
<dbReference type="IntAct" id="P54289">
    <property type="interactions" value="69"/>
</dbReference>
<dbReference type="MINT" id="P54289"/>
<dbReference type="STRING" id="9606.ENSP00000349320"/>
<dbReference type="BindingDB" id="P54289"/>
<dbReference type="ChEMBL" id="CHEMBL1919"/>
<dbReference type="DrugBank" id="DB02884">
    <property type="generic name" value="3-Cyclohexyl-L-alanine"/>
</dbReference>
<dbReference type="DrugBank" id="DB00381">
    <property type="generic name" value="Amlodipine"/>
</dbReference>
<dbReference type="DrugBank" id="DB12032">
    <property type="generic name" value="Atagabalin"/>
</dbReference>
<dbReference type="DrugBank" id="DB13746">
    <property type="generic name" value="Bioallethrin"/>
</dbReference>
<dbReference type="DrugBank" id="DB11148">
    <property type="generic name" value="Butamben"/>
</dbReference>
<dbReference type="DrugBank" id="DB04838">
    <property type="generic name" value="Cyclandelate"/>
</dbReference>
<dbReference type="DrugBank" id="DB00343">
    <property type="generic name" value="Diltiazem"/>
</dbReference>
<dbReference type="DrugBank" id="DB09235">
    <property type="generic name" value="Efonidipine"/>
</dbReference>
<dbReference type="DrugBank" id="DB00228">
    <property type="generic name" value="Enflurane"/>
</dbReference>
<dbReference type="DrugBank" id="DB00153">
    <property type="generic name" value="Ergocalciferol"/>
</dbReference>
<dbReference type="DrugBank" id="DB01023">
    <property type="generic name" value="Felodipine"/>
</dbReference>
<dbReference type="DrugBank" id="DB00996">
    <property type="generic name" value="Gabapentin"/>
</dbReference>
<dbReference type="DrugBank" id="DB08872">
    <property type="generic name" value="Gabapentin enacarbil"/>
</dbReference>
<dbReference type="DrugBank" id="DB00308">
    <property type="generic name" value="Ibutilide"/>
</dbReference>
<dbReference type="DrugBank" id="DB12105">
    <property type="generic name" value="Imagabalin"/>
</dbReference>
<dbReference type="DrugBank" id="DB00270">
    <property type="generic name" value="Isradipine"/>
</dbReference>
<dbReference type="DrugBank" id="DB00528">
    <property type="generic name" value="Lercanidipine"/>
</dbReference>
<dbReference type="DrugBank" id="DB11825">
    <property type="generic name" value="Mirogabalin"/>
</dbReference>
<dbReference type="DrugBank" id="DB00622">
    <property type="generic name" value="Nicardipine"/>
</dbReference>
<dbReference type="DrugBank" id="DB06712">
    <property type="generic name" value="Nilvadipine"/>
</dbReference>
<dbReference type="DrugBank" id="DB00401">
    <property type="generic name" value="Nisoldipine"/>
</dbReference>
<dbReference type="DrugBank" id="DB01054">
    <property type="generic name" value="Nitrendipine"/>
</dbReference>
<dbReference type="DrugBank" id="DB00230">
    <property type="generic name" value="Pregabalin"/>
</dbReference>
<dbReference type="DrugBank" id="DB00661">
    <property type="generic name" value="Verapamil"/>
</dbReference>
<dbReference type="DrugBank" id="DB12743">
    <property type="generic name" value="Z-160"/>
</dbReference>
<dbReference type="DrugCentral" id="P54289"/>
<dbReference type="TCDB" id="8.A.18.1.1">
    <property type="family name" value="the ca(2+) channel auxiliary subunit Alpha2Delta types 1-4 (cca-Alpha2Delta) family"/>
</dbReference>
<dbReference type="GlyConnect" id="1895">
    <property type="glycosylation" value="24 N-Linked glycans (7 sites)"/>
</dbReference>
<dbReference type="GlyCosmos" id="P54289">
    <property type="glycosylation" value="17 sites, 25 glycans"/>
</dbReference>
<dbReference type="GlyGen" id="P54289">
    <property type="glycosylation" value="18 sites, 53 N-linked glycans (11 sites), 1 O-linked glycan (1 site)"/>
</dbReference>
<dbReference type="iPTMnet" id="P54289"/>
<dbReference type="PhosphoSitePlus" id="P54289"/>
<dbReference type="SwissPalm" id="P54289"/>
<dbReference type="BioMuta" id="CACNA2D1"/>
<dbReference type="DMDM" id="262527579"/>
<dbReference type="jPOST" id="P54289"/>
<dbReference type="MassIVE" id="P54289"/>
<dbReference type="PaxDb" id="9606-ENSP00000349320"/>
<dbReference type="PeptideAtlas" id="P54289"/>
<dbReference type="ProteomicsDB" id="56675">
    <molecule id="P54289-1"/>
</dbReference>
<dbReference type="ProteomicsDB" id="56676">
    <molecule id="P54289-2"/>
</dbReference>
<dbReference type="ProteomicsDB" id="56677">
    <molecule id="P54289-3"/>
</dbReference>
<dbReference type="ProteomicsDB" id="56678">
    <molecule id="P54289-4"/>
</dbReference>
<dbReference type="ProteomicsDB" id="56679">
    <molecule id="P54289-5"/>
</dbReference>
<dbReference type="Pumba" id="P54289"/>
<dbReference type="Antibodypedia" id="2200">
    <property type="antibodies" value="280 antibodies from 34 providers"/>
</dbReference>
<dbReference type="DNASU" id="781"/>
<dbReference type="Ensembl" id="ENST00000356860.8">
    <molecule id="P54289-2"/>
    <property type="protein sequence ID" value="ENSP00000349320.3"/>
    <property type="gene ID" value="ENSG00000153956.17"/>
</dbReference>
<dbReference type="Ensembl" id="ENST00000443883.2">
    <molecule id="P54289-1"/>
    <property type="protein sequence ID" value="ENSP00000409374.2"/>
    <property type="gene ID" value="ENSG00000153956.17"/>
</dbReference>
<dbReference type="GeneID" id="781"/>
<dbReference type="KEGG" id="hsa:781"/>
<dbReference type="MANE-Select" id="ENST00000356860.8">
    <molecule id="P54289-2"/>
    <property type="protein sequence ID" value="ENSP00000349320.3"/>
    <property type="RefSeq nucleotide sequence ID" value="NM_000722.4"/>
    <property type="RefSeq protein sequence ID" value="NP_000713.2"/>
</dbReference>
<dbReference type="UCSC" id="uc003uhr.2">
    <molecule id="P54289-1"/>
    <property type="organism name" value="human"/>
</dbReference>
<dbReference type="AGR" id="HGNC:1399"/>
<dbReference type="CTD" id="781"/>
<dbReference type="DisGeNET" id="781"/>
<dbReference type="GeneCards" id="CACNA2D1"/>
<dbReference type="GeneReviews" id="CACNA2D1"/>
<dbReference type="HGNC" id="HGNC:1399">
    <property type="gene designation" value="CACNA2D1"/>
</dbReference>
<dbReference type="HPA" id="ENSG00000153956">
    <property type="expression patterns" value="Tissue enhanced (skeletal muscle, tongue)"/>
</dbReference>
<dbReference type="MalaCards" id="CACNA2D1"/>
<dbReference type="MIM" id="114204">
    <property type="type" value="gene"/>
</dbReference>
<dbReference type="MIM" id="620149">
    <property type="type" value="phenotype"/>
</dbReference>
<dbReference type="neXtProt" id="NX_P54289"/>
<dbReference type="OpenTargets" id="ENSG00000153956"/>
<dbReference type="Orphanet" id="130">
    <property type="disease" value="Brugada syndrome"/>
</dbReference>
<dbReference type="Orphanet" id="51083">
    <property type="disease" value="Familial short QT syndrome"/>
</dbReference>
<dbReference type="Orphanet" id="442835">
    <property type="disease" value="Non-specific early-onset epileptic encephalopathy"/>
</dbReference>
<dbReference type="PharmGKB" id="PA86"/>
<dbReference type="VEuPathDB" id="HostDB:ENSG00000153956"/>
<dbReference type="eggNOG" id="KOG2353">
    <property type="taxonomic scope" value="Eukaryota"/>
</dbReference>
<dbReference type="GeneTree" id="ENSGT00940000155209"/>
<dbReference type="HOGENOM" id="CLU_004660_0_0_1"/>
<dbReference type="InParanoid" id="P54289"/>
<dbReference type="OMA" id="NRTKTHQ"/>
<dbReference type="OrthoDB" id="10054666at2759"/>
<dbReference type="PAN-GO" id="P54289">
    <property type="GO annotations" value="2 GO annotations based on evolutionary models"/>
</dbReference>
<dbReference type="PhylomeDB" id="P54289"/>
<dbReference type="TreeFam" id="TF315824"/>
<dbReference type="PathwayCommons" id="P54289"/>
<dbReference type="Reactome" id="R-HSA-9856532">
    <property type="pathway name" value="Mechanical load activates signaling by PIEZO1 and integrins in osteocytes"/>
</dbReference>
<dbReference type="SignaLink" id="P54289"/>
<dbReference type="BioGRID-ORCS" id="781">
    <property type="hits" value="9 hits in 1156 CRISPR screens"/>
</dbReference>
<dbReference type="CD-CODE" id="FB4E32DD">
    <property type="entry name" value="Presynaptic clusters and postsynaptic densities"/>
</dbReference>
<dbReference type="ChiTaRS" id="CACNA2D1">
    <property type="organism name" value="human"/>
</dbReference>
<dbReference type="GeneWiki" id="CACNA2D1"/>
<dbReference type="GenomeRNAi" id="781"/>
<dbReference type="Pharos" id="P54289">
    <property type="development level" value="Tclin"/>
</dbReference>
<dbReference type="PRO" id="PR:P54289"/>
<dbReference type="Proteomes" id="UP000005640">
    <property type="component" value="Chromosome 7"/>
</dbReference>
<dbReference type="RNAct" id="P54289">
    <property type="molecule type" value="protein"/>
</dbReference>
<dbReference type="Bgee" id="ENSG00000153956">
    <property type="expression patterns" value="Expressed in biceps brachii and 186 other cell types or tissues"/>
</dbReference>
<dbReference type="ExpressionAtlas" id="P54289">
    <property type="expression patterns" value="baseline and differential"/>
</dbReference>
<dbReference type="GO" id="GO:0070062">
    <property type="term" value="C:extracellular exosome"/>
    <property type="evidence" value="ECO:0007005"/>
    <property type="project" value="UniProtKB"/>
</dbReference>
<dbReference type="GO" id="GO:0098982">
    <property type="term" value="C:GABA-ergic synapse"/>
    <property type="evidence" value="ECO:0007669"/>
    <property type="project" value="Ensembl"/>
</dbReference>
<dbReference type="GO" id="GO:1990454">
    <property type="term" value="C:L-type voltage-gated calcium channel complex"/>
    <property type="evidence" value="ECO:0000314"/>
    <property type="project" value="BHF-UCL"/>
</dbReference>
<dbReference type="GO" id="GO:0098992">
    <property type="term" value="C:neuronal dense core vesicle"/>
    <property type="evidence" value="ECO:0007669"/>
    <property type="project" value="Ensembl"/>
</dbReference>
<dbReference type="GO" id="GO:0005886">
    <property type="term" value="C:plasma membrane"/>
    <property type="evidence" value="ECO:0000314"/>
    <property type="project" value="UniProtKB"/>
</dbReference>
<dbReference type="GO" id="GO:0048787">
    <property type="term" value="C:presynaptic active zone membrane"/>
    <property type="evidence" value="ECO:0007669"/>
    <property type="project" value="Ensembl"/>
</dbReference>
<dbReference type="GO" id="GO:0016529">
    <property type="term" value="C:sarcoplasmic reticulum"/>
    <property type="evidence" value="ECO:0007669"/>
    <property type="project" value="Ensembl"/>
</dbReference>
<dbReference type="GO" id="GO:0005891">
    <property type="term" value="C:voltage-gated calcium channel complex"/>
    <property type="evidence" value="ECO:0000314"/>
    <property type="project" value="UniProtKB"/>
</dbReference>
<dbReference type="GO" id="GO:0046872">
    <property type="term" value="F:metal ion binding"/>
    <property type="evidence" value="ECO:0007669"/>
    <property type="project" value="UniProtKB-KW"/>
</dbReference>
<dbReference type="GO" id="GO:0005245">
    <property type="term" value="F:voltage-gated calcium channel activity"/>
    <property type="evidence" value="ECO:0000314"/>
    <property type="project" value="BHF-UCL"/>
</dbReference>
<dbReference type="GO" id="GO:0098703">
    <property type="term" value="P:calcium ion import across plasma membrane"/>
    <property type="evidence" value="ECO:0000250"/>
    <property type="project" value="BHF-UCL"/>
</dbReference>
<dbReference type="GO" id="GO:0061577">
    <property type="term" value="P:calcium ion transmembrane transport via high voltage-gated calcium channel"/>
    <property type="evidence" value="ECO:0000250"/>
    <property type="project" value="BHF-UCL"/>
</dbReference>
<dbReference type="GO" id="GO:0006816">
    <property type="term" value="P:calcium ion transport"/>
    <property type="evidence" value="ECO:0000314"/>
    <property type="project" value="UniProtKB"/>
</dbReference>
<dbReference type="GO" id="GO:0060402">
    <property type="term" value="P:calcium ion transport into cytosol"/>
    <property type="evidence" value="ECO:0000250"/>
    <property type="project" value="BHF-UCL"/>
</dbReference>
<dbReference type="GO" id="GO:0086002">
    <property type="term" value="P:cardiac muscle cell action potential involved in contraction"/>
    <property type="evidence" value="ECO:0000315"/>
    <property type="project" value="BHF-UCL"/>
</dbReference>
<dbReference type="GO" id="GO:1904646">
    <property type="term" value="P:cellular response to amyloid-beta"/>
    <property type="evidence" value="ECO:0000316"/>
    <property type="project" value="ARUK-UCL"/>
</dbReference>
<dbReference type="GO" id="GO:0086048">
    <property type="term" value="P:membrane depolarization during bundle of His cell action potential"/>
    <property type="evidence" value="ECO:0000315"/>
    <property type="project" value="BHF-UCL"/>
</dbReference>
<dbReference type="GO" id="GO:1902514">
    <property type="term" value="P:regulation of calcium ion transmembrane transport via high voltage-gated calcium channel"/>
    <property type="evidence" value="ECO:0000316"/>
    <property type="project" value="ARUK-UCL"/>
</dbReference>
<dbReference type="GO" id="GO:0051924">
    <property type="term" value="P:regulation of calcium ion transport"/>
    <property type="evidence" value="ECO:0000314"/>
    <property type="project" value="BHF-UCL"/>
</dbReference>
<dbReference type="GO" id="GO:0086091">
    <property type="term" value="P:regulation of heart rate by cardiac conduction"/>
    <property type="evidence" value="ECO:0000315"/>
    <property type="project" value="BHF-UCL"/>
</dbReference>
<dbReference type="GO" id="GO:0098903">
    <property type="term" value="P:regulation of membrane repolarization during action potential"/>
    <property type="evidence" value="ECO:0000250"/>
    <property type="project" value="BHF-UCL"/>
</dbReference>
<dbReference type="GO" id="GO:0060307">
    <property type="term" value="P:regulation of ventricular cardiac muscle cell membrane repolarization"/>
    <property type="evidence" value="ECO:0000315"/>
    <property type="project" value="BHF-UCL"/>
</dbReference>
<dbReference type="CDD" id="cd18774">
    <property type="entry name" value="PDC2_HK_sensor"/>
    <property type="match status" value="1"/>
</dbReference>
<dbReference type="CDD" id="cd01463">
    <property type="entry name" value="vWA_VGCC_like"/>
    <property type="match status" value="1"/>
</dbReference>
<dbReference type="FunFam" id="3.30.450.20:FF:000014">
    <property type="entry name" value="voltage-dependent calcium channel subunit alpha-2/delta-1 isoform X1"/>
    <property type="match status" value="1"/>
</dbReference>
<dbReference type="FunFam" id="3.40.50.410:FF:000006">
    <property type="entry name" value="voltage-dependent calcium channel subunit alpha-2/delta-1 isoform X1"/>
    <property type="match status" value="1"/>
</dbReference>
<dbReference type="Gene3D" id="3.30.450.20">
    <property type="entry name" value="PAS domain"/>
    <property type="match status" value="1"/>
</dbReference>
<dbReference type="Gene3D" id="3.40.50.410">
    <property type="entry name" value="von Willebrand factor, type A domain"/>
    <property type="match status" value="1"/>
</dbReference>
<dbReference type="InterPro" id="IPR051173">
    <property type="entry name" value="Ca_channel_alpha-2/delta"/>
</dbReference>
<dbReference type="InterPro" id="IPR013680">
    <property type="entry name" value="VDCC_a2/dsu"/>
</dbReference>
<dbReference type="InterPro" id="IPR013608">
    <property type="entry name" value="VWA_N"/>
</dbReference>
<dbReference type="InterPro" id="IPR002035">
    <property type="entry name" value="VWF_A"/>
</dbReference>
<dbReference type="InterPro" id="IPR036465">
    <property type="entry name" value="vWFA_dom_sf"/>
</dbReference>
<dbReference type="PANTHER" id="PTHR10166">
    <property type="entry name" value="VOLTAGE-DEPENDENT CALCIUM CHANNEL SUBUNIT ALPHA-2/DELTA-RELATED"/>
    <property type="match status" value="1"/>
</dbReference>
<dbReference type="PANTHER" id="PTHR10166:SF6">
    <property type="entry name" value="VOLTAGE-DEPENDENT CALCIUM CHANNEL SUBUNIT ALPHA-2_DELTA-1"/>
    <property type="match status" value="1"/>
</dbReference>
<dbReference type="Pfam" id="PF08473">
    <property type="entry name" value="VGCC_alpha2"/>
    <property type="match status" value="1"/>
</dbReference>
<dbReference type="Pfam" id="PF00092">
    <property type="entry name" value="VWA"/>
    <property type="match status" value="1"/>
</dbReference>
<dbReference type="Pfam" id="PF08399">
    <property type="entry name" value="VWA_N"/>
    <property type="match status" value="1"/>
</dbReference>
<dbReference type="SMART" id="SM00327">
    <property type="entry name" value="VWA"/>
    <property type="match status" value="1"/>
</dbReference>
<dbReference type="SUPFAM" id="SSF53300">
    <property type="entry name" value="vWA-like"/>
    <property type="match status" value="1"/>
</dbReference>
<dbReference type="PROSITE" id="PS50234">
    <property type="entry name" value="VWFA"/>
    <property type="match status" value="1"/>
</dbReference>